<protein>
    <recommendedName>
        <fullName evidence="1">3-isopropylmalate dehydratase small subunit</fullName>
        <ecNumber evidence="1">4.2.1.33</ecNumber>
    </recommendedName>
    <alternativeName>
        <fullName evidence="1">Alpha-IPM isomerase</fullName>
        <shortName evidence="1">IPMI</shortName>
    </alternativeName>
    <alternativeName>
        <fullName evidence="1">Isopropylmalate isomerase</fullName>
    </alternativeName>
</protein>
<comment type="function">
    <text evidence="1">Catalyzes the isomerization between 2-isopropylmalate and 3-isopropylmalate, via the formation of 2-isopropylmaleate.</text>
</comment>
<comment type="catalytic activity">
    <reaction evidence="1">
        <text>(2R,3S)-3-isopropylmalate = (2S)-2-isopropylmalate</text>
        <dbReference type="Rhea" id="RHEA:32287"/>
        <dbReference type="ChEBI" id="CHEBI:1178"/>
        <dbReference type="ChEBI" id="CHEBI:35121"/>
        <dbReference type="EC" id="4.2.1.33"/>
    </reaction>
</comment>
<comment type="pathway">
    <text evidence="1">Amino-acid biosynthesis; L-leucine biosynthesis; L-leucine from 3-methyl-2-oxobutanoate: step 2/4.</text>
</comment>
<comment type="subunit">
    <text evidence="1">Heterodimer of LeuC and LeuD.</text>
</comment>
<comment type="similarity">
    <text evidence="1">Belongs to the LeuD family. LeuD type 1 subfamily.</text>
</comment>
<feature type="chain" id="PRO_1000135799" description="3-isopropylmalate dehydratase small subunit">
    <location>
        <begin position="1"/>
        <end position="217"/>
    </location>
</feature>
<reference key="1">
    <citation type="submission" date="2007-11" db="EMBL/GenBank/DDBJ databases">
        <title>Complete sequence of Delftia acidovorans DSM 14801 / SPH-1.</title>
        <authorList>
            <person name="Copeland A."/>
            <person name="Lucas S."/>
            <person name="Lapidus A."/>
            <person name="Barry K."/>
            <person name="Glavina del Rio T."/>
            <person name="Dalin E."/>
            <person name="Tice H."/>
            <person name="Pitluck S."/>
            <person name="Lowry S."/>
            <person name="Clum A."/>
            <person name="Schmutz J."/>
            <person name="Larimer F."/>
            <person name="Land M."/>
            <person name="Hauser L."/>
            <person name="Kyrpides N."/>
            <person name="Kim E."/>
            <person name="Schleheck D."/>
            <person name="Richardson P."/>
        </authorList>
    </citation>
    <scope>NUCLEOTIDE SEQUENCE [LARGE SCALE GENOMIC DNA]</scope>
    <source>
        <strain>DSM 14801 / SPH-1</strain>
    </source>
</reference>
<organism>
    <name type="scientific">Delftia acidovorans (strain DSM 14801 / SPH-1)</name>
    <dbReference type="NCBI Taxonomy" id="398578"/>
    <lineage>
        <taxon>Bacteria</taxon>
        <taxon>Pseudomonadati</taxon>
        <taxon>Pseudomonadota</taxon>
        <taxon>Betaproteobacteria</taxon>
        <taxon>Burkholderiales</taxon>
        <taxon>Comamonadaceae</taxon>
        <taxon>Delftia</taxon>
    </lineage>
</organism>
<keyword id="KW-0028">Amino-acid biosynthesis</keyword>
<keyword id="KW-0100">Branched-chain amino acid biosynthesis</keyword>
<keyword id="KW-0432">Leucine biosynthesis</keyword>
<keyword id="KW-0456">Lyase</keyword>
<keyword id="KW-1185">Reference proteome</keyword>
<evidence type="ECO:0000255" key="1">
    <source>
        <dbReference type="HAMAP-Rule" id="MF_01031"/>
    </source>
</evidence>
<dbReference type="EC" id="4.2.1.33" evidence="1"/>
<dbReference type="EMBL" id="CP000884">
    <property type="protein sequence ID" value="ABX37866.1"/>
    <property type="molecule type" value="Genomic_DNA"/>
</dbReference>
<dbReference type="RefSeq" id="WP_012207036.1">
    <property type="nucleotide sequence ID" value="NC_010002.1"/>
</dbReference>
<dbReference type="SMR" id="A9BNH1"/>
<dbReference type="STRING" id="398578.Daci_5237"/>
<dbReference type="GeneID" id="24113965"/>
<dbReference type="KEGG" id="dac:Daci_5237"/>
<dbReference type="eggNOG" id="COG0066">
    <property type="taxonomic scope" value="Bacteria"/>
</dbReference>
<dbReference type="HOGENOM" id="CLU_081378_0_3_4"/>
<dbReference type="UniPathway" id="UPA00048">
    <property type="reaction ID" value="UER00071"/>
</dbReference>
<dbReference type="Proteomes" id="UP000000784">
    <property type="component" value="Chromosome"/>
</dbReference>
<dbReference type="GO" id="GO:0009316">
    <property type="term" value="C:3-isopropylmalate dehydratase complex"/>
    <property type="evidence" value="ECO:0007669"/>
    <property type="project" value="InterPro"/>
</dbReference>
<dbReference type="GO" id="GO:0003861">
    <property type="term" value="F:3-isopropylmalate dehydratase activity"/>
    <property type="evidence" value="ECO:0007669"/>
    <property type="project" value="UniProtKB-UniRule"/>
</dbReference>
<dbReference type="GO" id="GO:0009098">
    <property type="term" value="P:L-leucine biosynthetic process"/>
    <property type="evidence" value="ECO:0007669"/>
    <property type="project" value="UniProtKB-UniRule"/>
</dbReference>
<dbReference type="CDD" id="cd01577">
    <property type="entry name" value="IPMI_Swivel"/>
    <property type="match status" value="1"/>
</dbReference>
<dbReference type="FunFam" id="3.20.19.10:FF:000003">
    <property type="entry name" value="3-isopropylmalate dehydratase small subunit"/>
    <property type="match status" value="1"/>
</dbReference>
<dbReference type="Gene3D" id="3.20.19.10">
    <property type="entry name" value="Aconitase, domain 4"/>
    <property type="match status" value="1"/>
</dbReference>
<dbReference type="HAMAP" id="MF_01031">
    <property type="entry name" value="LeuD_type1"/>
    <property type="match status" value="1"/>
</dbReference>
<dbReference type="InterPro" id="IPR004431">
    <property type="entry name" value="3-IsopropMal_deHydase_ssu"/>
</dbReference>
<dbReference type="InterPro" id="IPR015928">
    <property type="entry name" value="Aconitase/3IPM_dehydase_swvl"/>
</dbReference>
<dbReference type="InterPro" id="IPR000573">
    <property type="entry name" value="AconitaseA/IPMdHydase_ssu_swvl"/>
</dbReference>
<dbReference type="InterPro" id="IPR033940">
    <property type="entry name" value="IPMI_Swivel"/>
</dbReference>
<dbReference type="InterPro" id="IPR050075">
    <property type="entry name" value="LeuD"/>
</dbReference>
<dbReference type="NCBIfam" id="TIGR00171">
    <property type="entry name" value="leuD"/>
    <property type="match status" value="1"/>
</dbReference>
<dbReference type="NCBIfam" id="NF002458">
    <property type="entry name" value="PRK01641.1"/>
    <property type="match status" value="1"/>
</dbReference>
<dbReference type="PANTHER" id="PTHR43345:SF5">
    <property type="entry name" value="3-ISOPROPYLMALATE DEHYDRATASE SMALL SUBUNIT"/>
    <property type="match status" value="1"/>
</dbReference>
<dbReference type="PANTHER" id="PTHR43345">
    <property type="entry name" value="3-ISOPROPYLMALATE DEHYDRATASE SMALL SUBUNIT 2-RELATED-RELATED"/>
    <property type="match status" value="1"/>
</dbReference>
<dbReference type="Pfam" id="PF00694">
    <property type="entry name" value="Aconitase_C"/>
    <property type="match status" value="1"/>
</dbReference>
<dbReference type="SUPFAM" id="SSF52016">
    <property type="entry name" value="LeuD/IlvD-like"/>
    <property type="match status" value="1"/>
</dbReference>
<name>LEUD_DELAS</name>
<gene>
    <name evidence="1" type="primary">leuD</name>
    <name type="ordered locus">Daci_5237</name>
</gene>
<accession>A9BNH1</accession>
<sequence>MQQFTVHKGLVAPMDRENVDTDAIIPKQFLKSIKKTGFGVNLFDEWRYLDHGEPGQDPASRKPNPDFVLNQPRYAGASILVARKNFGCGSSREHAPWALDQYGFRAILAPSFADIFFNNCFKNGLLPIVLPEATIDMLFNEIAAFPGYELTIDLDRQVIVRPQGEEIPFDVIAFRKFCLLNGFDDIGLTLRHADKIRAYEAERLATKPWLAHTLVQR</sequence>
<proteinExistence type="inferred from homology"/>